<sequence>MGRIIGIDLGTTNSCVSILENGNVKVIENAEGTRTTPSIIAYANDGEILVGQSAKRQAVTNPHNTLYAVKRLIGRKFEEDVVQKDIQMVPYKIVKADNGDAWVEVNGQKMAPPQISAEILKKMKKTAEDYLGEAVTEAVITVPAYFNDSQRQATKDAGRIAGLDVKRIINEPTAAALAYGMDKAKGDHTVIVYDLGGGTFDVSVIEIAEVDGEHQFEVLATNGDTFLGGEDFDIRLIDYFVDEFKKESGMNLKGDPLAMQRLKEAAEKAKIELSSSTQTEVNLPYITADATGPKHLVVKISRSKLESLVEDLVQRTIAPCEMALKDAGIDRSKINDVILVGGQTRMPLVQKLVTEFFGKEARKDVNPDEAVAMGAAIQGAVLAGDVKDVLLLDVSPLTLGIETMGGVMTALIEKNTTIPTKKSQVFSTADDNQNAVTIHVLQGERKQAAQNKSLGKFDLAEIPPAPRGVPQIEVTFDIDANGILHVGAKDKATGKQQSIVIKANSGLSEEEIQQMVRDAEVNSEEDRKFEELASARNQGDALVHSTRKMIADAGDKVTAEEKTAVEAALVALEAAIKGDDKAAIEAKVEELSKVSAPIAQKMYAEQAENPDAAAKPAEETAKADDVVDAEFEEVKDHK</sequence>
<evidence type="ECO:0000255" key="1">
    <source>
        <dbReference type="HAMAP-Rule" id="MF_00332"/>
    </source>
</evidence>
<evidence type="ECO:0000256" key="2">
    <source>
        <dbReference type="SAM" id="MobiDB-lite"/>
    </source>
</evidence>
<keyword id="KW-0067">ATP-binding</keyword>
<keyword id="KW-0143">Chaperone</keyword>
<keyword id="KW-0547">Nucleotide-binding</keyword>
<keyword id="KW-0597">Phosphoprotein</keyword>
<keyword id="KW-0346">Stress response</keyword>
<organism>
    <name type="scientific">Pseudomonas syringae pv. syringae (strain B728a)</name>
    <dbReference type="NCBI Taxonomy" id="205918"/>
    <lineage>
        <taxon>Bacteria</taxon>
        <taxon>Pseudomonadati</taxon>
        <taxon>Pseudomonadota</taxon>
        <taxon>Gammaproteobacteria</taxon>
        <taxon>Pseudomonadales</taxon>
        <taxon>Pseudomonadaceae</taxon>
        <taxon>Pseudomonas</taxon>
        <taxon>Pseudomonas syringae</taxon>
    </lineage>
</organism>
<feature type="chain" id="PRO_0000225999" description="Chaperone protein DnaK">
    <location>
        <begin position="1"/>
        <end position="638"/>
    </location>
</feature>
<feature type="region of interest" description="Disordered" evidence="2">
    <location>
        <begin position="605"/>
        <end position="625"/>
    </location>
</feature>
<feature type="compositionally biased region" description="Basic and acidic residues" evidence="2">
    <location>
        <begin position="616"/>
        <end position="625"/>
    </location>
</feature>
<feature type="modified residue" description="Phosphothreonine; by autocatalysis" evidence="1">
    <location>
        <position position="199"/>
    </location>
</feature>
<reference key="1">
    <citation type="journal article" date="2005" name="Proc. Natl. Acad. Sci. U.S.A.">
        <title>Comparison of the complete genome sequences of Pseudomonas syringae pv. syringae B728a and pv. tomato DC3000.</title>
        <authorList>
            <person name="Feil H."/>
            <person name="Feil W.S."/>
            <person name="Chain P."/>
            <person name="Larimer F."/>
            <person name="Dibartolo G."/>
            <person name="Copeland A."/>
            <person name="Lykidis A."/>
            <person name="Trong S."/>
            <person name="Nolan M."/>
            <person name="Goltsman E."/>
            <person name="Thiel J."/>
            <person name="Malfatti S."/>
            <person name="Loper J.E."/>
            <person name="Lapidus A."/>
            <person name="Detter J.C."/>
            <person name="Land M."/>
            <person name="Richardson P.M."/>
            <person name="Kyrpides N.C."/>
            <person name="Ivanova N."/>
            <person name="Lindow S.E."/>
        </authorList>
    </citation>
    <scope>NUCLEOTIDE SEQUENCE [LARGE SCALE GENOMIC DNA]</scope>
    <source>
        <strain>B728a</strain>
    </source>
</reference>
<gene>
    <name evidence="1" type="primary">dnaK</name>
    <name type="ordered locus">Psyr_4195</name>
</gene>
<protein>
    <recommendedName>
        <fullName evidence="1">Chaperone protein DnaK</fullName>
    </recommendedName>
    <alternativeName>
        <fullName evidence="1">HSP70</fullName>
    </alternativeName>
    <alternativeName>
        <fullName evidence="1">Heat shock 70 kDa protein</fullName>
    </alternativeName>
    <alternativeName>
        <fullName evidence="1">Heat shock protein 70</fullName>
    </alternativeName>
</protein>
<name>DNAK_PSEU2</name>
<proteinExistence type="inferred from homology"/>
<comment type="function">
    <text evidence="1">Acts as a chaperone.</text>
</comment>
<comment type="induction">
    <text evidence="1">By stress conditions e.g. heat shock.</text>
</comment>
<comment type="similarity">
    <text evidence="1">Belongs to the heat shock protein 70 family.</text>
</comment>
<dbReference type="EMBL" id="CP000075">
    <property type="protein sequence ID" value="AAY39225.1"/>
    <property type="molecule type" value="Genomic_DNA"/>
</dbReference>
<dbReference type="RefSeq" id="WP_003400158.1">
    <property type="nucleotide sequence ID" value="NC_007005.1"/>
</dbReference>
<dbReference type="RefSeq" id="YP_237263.1">
    <property type="nucleotide sequence ID" value="NC_007005.1"/>
</dbReference>
<dbReference type="SMR" id="Q4ZNP7"/>
<dbReference type="STRING" id="205918.Psyr_4195"/>
<dbReference type="KEGG" id="psb:Psyr_4195"/>
<dbReference type="PATRIC" id="fig|205918.7.peg.4322"/>
<dbReference type="eggNOG" id="COG0443">
    <property type="taxonomic scope" value="Bacteria"/>
</dbReference>
<dbReference type="HOGENOM" id="CLU_005965_2_1_6"/>
<dbReference type="OrthoDB" id="9766019at2"/>
<dbReference type="Proteomes" id="UP000000426">
    <property type="component" value="Chromosome"/>
</dbReference>
<dbReference type="GO" id="GO:0005524">
    <property type="term" value="F:ATP binding"/>
    <property type="evidence" value="ECO:0007669"/>
    <property type="project" value="UniProtKB-UniRule"/>
</dbReference>
<dbReference type="GO" id="GO:0140662">
    <property type="term" value="F:ATP-dependent protein folding chaperone"/>
    <property type="evidence" value="ECO:0007669"/>
    <property type="project" value="InterPro"/>
</dbReference>
<dbReference type="GO" id="GO:0051082">
    <property type="term" value="F:unfolded protein binding"/>
    <property type="evidence" value="ECO:0007669"/>
    <property type="project" value="InterPro"/>
</dbReference>
<dbReference type="CDD" id="cd10234">
    <property type="entry name" value="ASKHA_NBD_HSP70_DnaK-like"/>
    <property type="match status" value="1"/>
</dbReference>
<dbReference type="FunFam" id="2.60.34.10:FF:000014">
    <property type="entry name" value="Chaperone protein DnaK HSP70"/>
    <property type="match status" value="1"/>
</dbReference>
<dbReference type="FunFam" id="3.30.30.30:FF:000003">
    <property type="entry name" value="Heat shock protein 9"/>
    <property type="match status" value="1"/>
</dbReference>
<dbReference type="FunFam" id="1.20.1270.10:FF:000001">
    <property type="entry name" value="Molecular chaperone DnaK"/>
    <property type="match status" value="1"/>
</dbReference>
<dbReference type="FunFam" id="3.30.420.40:FF:000004">
    <property type="entry name" value="Molecular chaperone DnaK"/>
    <property type="match status" value="1"/>
</dbReference>
<dbReference type="FunFam" id="3.90.640.10:FF:000003">
    <property type="entry name" value="Molecular chaperone DnaK"/>
    <property type="match status" value="1"/>
</dbReference>
<dbReference type="Gene3D" id="1.20.1270.10">
    <property type="match status" value="1"/>
</dbReference>
<dbReference type="Gene3D" id="3.30.420.40">
    <property type="match status" value="2"/>
</dbReference>
<dbReference type="Gene3D" id="3.90.640.10">
    <property type="entry name" value="Actin, Chain A, domain 4"/>
    <property type="match status" value="1"/>
</dbReference>
<dbReference type="Gene3D" id="2.60.34.10">
    <property type="entry name" value="Substrate Binding Domain Of DNAk, Chain A, domain 1"/>
    <property type="match status" value="1"/>
</dbReference>
<dbReference type="HAMAP" id="MF_00332">
    <property type="entry name" value="DnaK"/>
    <property type="match status" value="1"/>
</dbReference>
<dbReference type="InterPro" id="IPR043129">
    <property type="entry name" value="ATPase_NBD"/>
</dbReference>
<dbReference type="InterPro" id="IPR012725">
    <property type="entry name" value="Chaperone_DnaK"/>
</dbReference>
<dbReference type="InterPro" id="IPR018181">
    <property type="entry name" value="Heat_shock_70_CS"/>
</dbReference>
<dbReference type="InterPro" id="IPR029048">
    <property type="entry name" value="HSP70_C_sf"/>
</dbReference>
<dbReference type="InterPro" id="IPR029047">
    <property type="entry name" value="HSP70_peptide-bd_sf"/>
</dbReference>
<dbReference type="InterPro" id="IPR013126">
    <property type="entry name" value="Hsp_70_fam"/>
</dbReference>
<dbReference type="NCBIfam" id="NF001413">
    <property type="entry name" value="PRK00290.1"/>
    <property type="match status" value="1"/>
</dbReference>
<dbReference type="NCBIfam" id="TIGR02350">
    <property type="entry name" value="prok_dnaK"/>
    <property type="match status" value="1"/>
</dbReference>
<dbReference type="PANTHER" id="PTHR19375">
    <property type="entry name" value="HEAT SHOCK PROTEIN 70KDA"/>
    <property type="match status" value="1"/>
</dbReference>
<dbReference type="Pfam" id="PF00012">
    <property type="entry name" value="HSP70"/>
    <property type="match status" value="1"/>
</dbReference>
<dbReference type="PRINTS" id="PR00301">
    <property type="entry name" value="HEATSHOCK70"/>
</dbReference>
<dbReference type="SUPFAM" id="SSF53067">
    <property type="entry name" value="Actin-like ATPase domain"/>
    <property type="match status" value="2"/>
</dbReference>
<dbReference type="SUPFAM" id="SSF100934">
    <property type="entry name" value="Heat shock protein 70kD (HSP70), C-terminal subdomain"/>
    <property type="match status" value="1"/>
</dbReference>
<dbReference type="SUPFAM" id="SSF100920">
    <property type="entry name" value="Heat shock protein 70kD (HSP70), peptide-binding domain"/>
    <property type="match status" value="1"/>
</dbReference>
<dbReference type="PROSITE" id="PS00297">
    <property type="entry name" value="HSP70_1"/>
    <property type="match status" value="1"/>
</dbReference>
<dbReference type="PROSITE" id="PS00329">
    <property type="entry name" value="HSP70_2"/>
    <property type="match status" value="1"/>
</dbReference>
<dbReference type="PROSITE" id="PS01036">
    <property type="entry name" value="HSP70_3"/>
    <property type="match status" value="1"/>
</dbReference>
<accession>Q4ZNP7</accession>